<proteinExistence type="inferred from homology"/>
<feature type="chain" id="PRO_0000241221" description="Aspartyl/glutamyl-tRNA(Asn/Gln) amidotransferase subunit B">
    <location>
        <begin position="1"/>
        <end position="481"/>
    </location>
</feature>
<keyword id="KW-0067">ATP-binding</keyword>
<keyword id="KW-0436">Ligase</keyword>
<keyword id="KW-0547">Nucleotide-binding</keyword>
<keyword id="KW-0648">Protein biosynthesis</keyword>
<reference key="1">
    <citation type="journal article" date="2006" name="J. Bacteriol.">
        <title>Comparative genomic analysis of three strains of Ehrlichia ruminantium reveals an active process of genome size plasticity.</title>
        <authorList>
            <person name="Frutos R."/>
            <person name="Viari A."/>
            <person name="Ferraz C."/>
            <person name="Morgat A."/>
            <person name="Eychenie S."/>
            <person name="Kandassamy Y."/>
            <person name="Chantal I."/>
            <person name="Bensaid A."/>
            <person name="Coissac E."/>
            <person name="Vachiery N."/>
            <person name="Demaille J."/>
            <person name="Martinez D."/>
        </authorList>
    </citation>
    <scope>NUCLEOTIDE SEQUENCE [LARGE SCALE GENOMIC DNA]</scope>
    <source>
        <strain>Gardel</strain>
    </source>
</reference>
<accession>Q5FHD2</accession>
<dbReference type="EC" id="6.3.5.-" evidence="1"/>
<dbReference type="EMBL" id="CR925677">
    <property type="protein sequence ID" value="CAI27738.1"/>
    <property type="molecule type" value="Genomic_DNA"/>
</dbReference>
<dbReference type="RefSeq" id="WP_011255446.1">
    <property type="nucleotide sequence ID" value="NC_006831.1"/>
</dbReference>
<dbReference type="SMR" id="Q5FHD2"/>
<dbReference type="KEGG" id="erg:ERGA_CDS_02860"/>
<dbReference type="HOGENOM" id="CLU_019240_0_0_5"/>
<dbReference type="OrthoDB" id="9804078at2"/>
<dbReference type="Proteomes" id="UP000000533">
    <property type="component" value="Chromosome"/>
</dbReference>
<dbReference type="GO" id="GO:0050566">
    <property type="term" value="F:asparaginyl-tRNA synthase (glutamine-hydrolyzing) activity"/>
    <property type="evidence" value="ECO:0007669"/>
    <property type="project" value="RHEA"/>
</dbReference>
<dbReference type="GO" id="GO:0005524">
    <property type="term" value="F:ATP binding"/>
    <property type="evidence" value="ECO:0007669"/>
    <property type="project" value="UniProtKB-KW"/>
</dbReference>
<dbReference type="GO" id="GO:0050567">
    <property type="term" value="F:glutaminyl-tRNA synthase (glutamine-hydrolyzing) activity"/>
    <property type="evidence" value="ECO:0007669"/>
    <property type="project" value="UniProtKB-UniRule"/>
</dbReference>
<dbReference type="GO" id="GO:0070681">
    <property type="term" value="P:glutaminyl-tRNAGln biosynthesis via transamidation"/>
    <property type="evidence" value="ECO:0007669"/>
    <property type="project" value="TreeGrafter"/>
</dbReference>
<dbReference type="GO" id="GO:0006412">
    <property type="term" value="P:translation"/>
    <property type="evidence" value="ECO:0007669"/>
    <property type="project" value="UniProtKB-UniRule"/>
</dbReference>
<dbReference type="FunFam" id="1.10.10.410:FF:000001">
    <property type="entry name" value="Aspartyl/glutamyl-tRNA(Asn/Gln) amidotransferase subunit B"/>
    <property type="match status" value="1"/>
</dbReference>
<dbReference type="Gene3D" id="1.10.10.410">
    <property type="match status" value="1"/>
</dbReference>
<dbReference type="Gene3D" id="1.10.150.380">
    <property type="entry name" value="GatB domain, N-terminal subdomain"/>
    <property type="match status" value="1"/>
</dbReference>
<dbReference type="HAMAP" id="MF_00121">
    <property type="entry name" value="GatB"/>
    <property type="match status" value="1"/>
</dbReference>
<dbReference type="InterPro" id="IPR017959">
    <property type="entry name" value="Asn/Gln-tRNA_amidoTrfase_suB/E"/>
</dbReference>
<dbReference type="InterPro" id="IPR006075">
    <property type="entry name" value="Asn/Gln-tRNA_Trfase_suB/E_cat"/>
</dbReference>
<dbReference type="InterPro" id="IPR018027">
    <property type="entry name" value="Asn/Gln_amidotransferase"/>
</dbReference>
<dbReference type="InterPro" id="IPR003789">
    <property type="entry name" value="Asn/Gln_tRNA_amidoTrase-B-like"/>
</dbReference>
<dbReference type="InterPro" id="IPR004413">
    <property type="entry name" value="GatB"/>
</dbReference>
<dbReference type="InterPro" id="IPR042114">
    <property type="entry name" value="GatB_C_1"/>
</dbReference>
<dbReference type="InterPro" id="IPR023168">
    <property type="entry name" value="GatB_Yqey_C_2"/>
</dbReference>
<dbReference type="InterPro" id="IPR017958">
    <property type="entry name" value="Gln-tRNA_amidoTrfase_suB_CS"/>
</dbReference>
<dbReference type="InterPro" id="IPR014746">
    <property type="entry name" value="Gln_synth/guanido_kin_cat_dom"/>
</dbReference>
<dbReference type="NCBIfam" id="TIGR00133">
    <property type="entry name" value="gatB"/>
    <property type="match status" value="1"/>
</dbReference>
<dbReference type="NCBIfam" id="NF004012">
    <property type="entry name" value="PRK05477.1-2"/>
    <property type="match status" value="1"/>
</dbReference>
<dbReference type="NCBIfam" id="NF004014">
    <property type="entry name" value="PRK05477.1-4"/>
    <property type="match status" value="1"/>
</dbReference>
<dbReference type="NCBIfam" id="NF004015">
    <property type="entry name" value="PRK05477.1-5"/>
    <property type="match status" value="1"/>
</dbReference>
<dbReference type="PANTHER" id="PTHR11659">
    <property type="entry name" value="GLUTAMYL-TRNA GLN AMIDOTRANSFERASE SUBUNIT B MITOCHONDRIAL AND PROKARYOTIC PET112-RELATED"/>
    <property type="match status" value="1"/>
</dbReference>
<dbReference type="PANTHER" id="PTHR11659:SF0">
    <property type="entry name" value="GLUTAMYL-TRNA(GLN) AMIDOTRANSFERASE SUBUNIT B, MITOCHONDRIAL"/>
    <property type="match status" value="1"/>
</dbReference>
<dbReference type="Pfam" id="PF02934">
    <property type="entry name" value="GatB_N"/>
    <property type="match status" value="1"/>
</dbReference>
<dbReference type="Pfam" id="PF02637">
    <property type="entry name" value="GatB_Yqey"/>
    <property type="match status" value="1"/>
</dbReference>
<dbReference type="SMART" id="SM00845">
    <property type="entry name" value="GatB_Yqey"/>
    <property type="match status" value="1"/>
</dbReference>
<dbReference type="SUPFAM" id="SSF89095">
    <property type="entry name" value="GatB/YqeY motif"/>
    <property type="match status" value="1"/>
</dbReference>
<dbReference type="SUPFAM" id="SSF55931">
    <property type="entry name" value="Glutamine synthetase/guanido kinase"/>
    <property type="match status" value="1"/>
</dbReference>
<dbReference type="PROSITE" id="PS01234">
    <property type="entry name" value="GATB"/>
    <property type="match status" value="1"/>
</dbReference>
<organism>
    <name type="scientific">Ehrlichia ruminantium (strain Gardel)</name>
    <dbReference type="NCBI Taxonomy" id="302409"/>
    <lineage>
        <taxon>Bacteria</taxon>
        <taxon>Pseudomonadati</taxon>
        <taxon>Pseudomonadota</taxon>
        <taxon>Alphaproteobacteria</taxon>
        <taxon>Rickettsiales</taxon>
        <taxon>Anaplasmataceae</taxon>
        <taxon>Ehrlichia</taxon>
    </lineage>
</organism>
<evidence type="ECO:0000255" key="1">
    <source>
        <dbReference type="HAMAP-Rule" id="MF_00121"/>
    </source>
</evidence>
<name>GATB_EHRRG</name>
<gene>
    <name evidence="1" type="primary">gatB</name>
    <name type="ordered locus">ERGA_CDS_02860</name>
</gene>
<sequence length="481" mass="54548">MKIIKGKKCDWEMIIGLEVHAQVISNSKLFSGASAKTYDSLPNTQVSLFDVAMPGMLPLLNQYCISQAVKTGLALSCKINNYSAFDRKNYFYPDLPSGYQITQFYYPIATDGKVVLEESNDKEVRITRIHLEQDAGKSIHEYGKTYVDFNRAGVALMEIVSEPDLRSTDEVAEYLKKLRMILRFIGTCDGDMEKGSFRCDANVSVRPLGSDKLGIRSEIKNLNSIRYVVQAIEYEANKQVMALENGEELIQNTLLFDVILGETRVIRNKEDAHDYRYFPDPDLFSLEIDDQYISEVKLSLPELPMQKRDRYIRDFKLNKYDADILVADRDVAAYFEEVVQKHDAKLAASWIVCDLFARLNKLGISINESAVKAGDMIQLLDLIVDKTISGKIAKQVFAIMFESGKSPISIVNEYGLKQLDDSDSVSMIVENVLENNKDKVLQYKQGKEKLFGYFVGQVMKETQGKANPELVNSIIKEKLQE</sequence>
<comment type="function">
    <text evidence="1">Allows the formation of correctly charged Asn-tRNA(Asn) or Gln-tRNA(Gln) through the transamidation of misacylated Asp-tRNA(Asn) or Glu-tRNA(Gln) in organisms which lack either or both of asparaginyl-tRNA or glutaminyl-tRNA synthetases. The reaction takes place in the presence of glutamine and ATP through an activated phospho-Asp-tRNA(Asn) or phospho-Glu-tRNA(Gln).</text>
</comment>
<comment type="catalytic activity">
    <reaction evidence="1">
        <text>L-glutamyl-tRNA(Gln) + L-glutamine + ATP + H2O = L-glutaminyl-tRNA(Gln) + L-glutamate + ADP + phosphate + H(+)</text>
        <dbReference type="Rhea" id="RHEA:17521"/>
        <dbReference type="Rhea" id="RHEA-COMP:9681"/>
        <dbReference type="Rhea" id="RHEA-COMP:9684"/>
        <dbReference type="ChEBI" id="CHEBI:15377"/>
        <dbReference type="ChEBI" id="CHEBI:15378"/>
        <dbReference type="ChEBI" id="CHEBI:29985"/>
        <dbReference type="ChEBI" id="CHEBI:30616"/>
        <dbReference type="ChEBI" id="CHEBI:43474"/>
        <dbReference type="ChEBI" id="CHEBI:58359"/>
        <dbReference type="ChEBI" id="CHEBI:78520"/>
        <dbReference type="ChEBI" id="CHEBI:78521"/>
        <dbReference type="ChEBI" id="CHEBI:456216"/>
    </reaction>
</comment>
<comment type="catalytic activity">
    <reaction evidence="1">
        <text>L-aspartyl-tRNA(Asn) + L-glutamine + ATP + H2O = L-asparaginyl-tRNA(Asn) + L-glutamate + ADP + phosphate + 2 H(+)</text>
        <dbReference type="Rhea" id="RHEA:14513"/>
        <dbReference type="Rhea" id="RHEA-COMP:9674"/>
        <dbReference type="Rhea" id="RHEA-COMP:9677"/>
        <dbReference type="ChEBI" id="CHEBI:15377"/>
        <dbReference type="ChEBI" id="CHEBI:15378"/>
        <dbReference type="ChEBI" id="CHEBI:29985"/>
        <dbReference type="ChEBI" id="CHEBI:30616"/>
        <dbReference type="ChEBI" id="CHEBI:43474"/>
        <dbReference type="ChEBI" id="CHEBI:58359"/>
        <dbReference type="ChEBI" id="CHEBI:78515"/>
        <dbReference type="ChEBI" id="CHEBI:78516"/>
        <dbReference type="ChEBI" id="CHEBI:456216"/>
    </reaction>
</comment>
<comment type="subunit">
    <text evidence="1">Heterotrimer of A, B and C subunits.</text>
</comment>
<comment type="similarity">
    <text evidence="1">Belongs to the GatB/GatE family. GatB subfamily.</text>
</comment>
<protein>
    <recommendedName>
        <fullName evidence="1">Aspartyl/glutamyl-tRNA(Asn/Gln) amidotransferase subunit B</fullName>
        <shortName evidence="1">Asp/Glu-ADT subunit B</shortName>
        <ecNumber evidence="1">6.3.5.-</ecNumber>
    </recommendedName>
</protein>